<protein>
    <recommendedName>
        <fullName evidence="1">Urease subunit alpha</fullName>
        <ecNumber evidence="1">3.5.1.5</ecNumber>
    </recommendedName>
    <alternativeName>
        <fullName evidence="1">Urea amidohydrolase subunit alpha</fullName>
    </alternativeName>
</protein>
<feature type="chain" id="PRO_0000234162" description="Urease subunit alpha">
    <location>
        <begin position="1"/>
        <end position="574"/>
    </location>
</feature>
<feature type="domain" description="Urease" evidence="1">
    <location>
        <begin position="131"/>
        <end position="574"/>
    </location>
</feature>
<feature type="region of interest" description="Disordered" evidence="2">
    <location>
        <begin position="384"/>
        <end position="403"/>
    </location>
</feature>
<feature type="active site" description="Proton donor" evidence="1">
    <location>
        <position position="322"/>
    </location>
</feature>
<feature type="binding site" evidence="1">
    <location>
        <position position="136"/>
    </location>
    <ligand>
        <name>Ni(2+)</name>
        <dbReference type="ChEBI" id="CHEBI:49786"/>
        <label>1</label>
    </ligand>
</feature>
<feature type="binding site" evidence="1">
    <location>
        <position position="138"/>
    </location>
    <ligand>
        <name>Ni(2+)</name>
        <dbReference type="ChEBI" id="CHEBI:49786"/>
        <label>1</label>
    </ligand>
</feature>
<feature type="binding site" description="via carbamate group" evidence="1">
    <location>
        <position position="219"/>
    </location>
    <ligand>
        <name>Ni(2+)</name>
        <dbReference type="ChEBI" id="CHEBI:49786"/>
        <label>1</label>
    </ligand>
</feature>
<feature type="binding site" description="via carbamate group" evidence="1">
    <location>
        <position position="219"/>
    </location>
    <ligand>
        <name>Ni(2+)</name>
        <dbReference type="ChEBI" id="CHEBI:49786"/>
        <label>2</label>
    </ligand>
</feature>
<feature type="binding site" evidence="1">
    <location>
        <position position="221"/>
    </location>
    <ligand>
        <name>substrate</name>
    </ligand>
</feature>
<feature type="binding site" evidence="1">
    <location>
        <position position="248"/>
    </location>
    <ligand>
        <name>Ni(2+)</name>
        <dbReference type="ChEBI" id="CHEBI:49786"/>
        <label>2</label>
    </ligand>
</feature>
<feature type="binding site" evidence="1">
    <location>
        <position position="274"/>
    </location>
    <ligand>
        <name>Ni(2+)</name>
        <dbReference type="ChEBI" id="CHEBI:49786"/>
        <label>2</label>
    </ligand>
</feature>
<feature type="binding site" evidence="1">
    <location>
        <position position="362"/>
    </location>
    <ligand>
        <name>Ni(2+)</name>
        <dbReference type="ChEBI" id="CHEBI:49786"/>
        <label>1</label>
    </ligand>
</feature>
<feature type="modified residue" description="N6-carboxylysine" evidence="1">
    <location>
        <position position="219"/>
    </location>
</feature>
<proteinExistence type="inferred from homology"/>
<sequence length="574" mass="61300">MAYRIDRQAYAETYGPTTGDRIRLADTELILEVERDFTTYGEEVKFGGGKVIRDGMGQSQQSRANGAVDTVITNALILDWWGIVKADIGLRDGRIVAIGKAGNPDITDGIDIVIGPGTEAIAGEGHIVTAGAIDSHIHFICPQQIETALASGVTTMLGGGTGPATGTNATTCTPGAFHISRMLQAAEGLPMNLGFFGKGNASTAEALEEQVLAGACGLKLHEDWGTTPAAIDCCLSVADRFDVQVCIHTDTLNEAGFVEDTIRAIGGRTIHTFHTEGAGGGHAPDIIRICGESNVLPSSTNPTRPYTRNTLEEHLDMLMVCHHLDPAIPEDVAFAESRIRRETIAAEDILHDLGAFSIIASDSQAMGRVGEVITRTFQTAHKMKVQRGPLPEDAANPRGSRNDNNRIKRYIAKVTINPAIAHGIDNHVGSVEVGKLADLVLWKPGFFGVRPELVIKGGSIIWAQMGDANASIPTPGPVHGRPMFAAFGKALAPSCLTFLSQAAIETDLPNKLGLQRACIPVLNTRTIGKAEMHNNNSLPKVEVDPQTYEVFADGDLLTCDPAEELPMAQRYLLL</sequence>
<evidence type="ECO:0000255" key="1">
    <source>
        <dbReference type="HAMAP-Rule" id="MF_01953"/>
    </source>
</evidence>
<evidence type="ECO:0000256" key="2">
    <source>
        <dbReference type="SAM" id="MobiDB-lite"/>
    </source>
</evidence>
<comment type="catalytic activity">
    <reaction evidence="1">
        <text>urea + 2 H2O + H(+) = hydrogencarbonate + 2 NH4(+)</text>
        <dbReference type="Rhea" id="RHEA:20557"/>
        <dbReference type="ChEBI" id="CHEBI:15377"/>
        <dbReference type="ChEBI" id="CHEBI:15378"/>
        <dbReference type="ChEBI" id="CHEBI:16199"/>
        <dbReference type="ChEBI" id="CHEBI:17544"/>
        <dbReference type="ChEBI" id="CHEBI:28938"/>
        <dbReference type="EC" id="3.5.1.5"/>
    </reaction>
</comment>
<comment type="cofactor">
    <cofactor evidence="1">
        <name>Ni cation</name>
        <dbReference type="ChEBI" id="CHEBI:25516"/>
    </cofactor>
    <text evidence="1">Binds 2 nickel ions per subunit.</text>
</comment>
<comment type="pathway">
    <text evidence="1">Nitrogen metabolism; urea degradation; CO(2) and NH(3) from urea (urease route): step 1/1.</text>
</comment>
<comment type="subunit">
    <text evidence="1">Heterotrimer of UreA (gamma), UreB (beta) and UreC (alpha) subunits. Three heterotrimers associate to form the active enzyme.</text>
</comment>
<comment type="subcellular location">
    <subcellularLocation>
        <location evidence="1">Cytoplasm</location>
    </subcellularLocation>
</comment>
<comment type="PTM">
    <text evidence="1">Carboxylation allows a single lysine to coordinate two nickel ions.</text>
</comment>
<comment type="similarity">
    <text evidence="1">Belongs to the metallo-dependent hydrolases superfamily. Urease alpha subunit family.</text>
</comment>
<organism>
    <name type="scientific">Prochlorococcus marinus (strain MIT 9313)</name>
    <dbReference type="NCBI Taxonomy" id="74547"/>
    <lineage>
        <taxon>Bacteria</taxon>
        <taxon>Bacillati</taxon>
        <taxon>Cyanobacteriota</taxon>
        <taxon>Cyanophyceae</taxon>
        <taxon>Synechococcales</taxon>
        <taxon>Prochlorococcaceae</taxon>
        <taxon>Prochlorococcus</taxon>
    </lineage>
</organism>
<name>URE1_PROMM</name>
<dbReference type="EC" id="3.5.1.5" evidence="1"/>
<dbReference type="EMBL" id="BX548175">
    <property type="protein sequence ID" value="CAE22410.1"/>
    <property type="molecule type" value="Genomic_DNA"/>
</dbReference>
<dbReference type="RefSeq" id="WP_011131600.1">
    <property type="nucleotide sequence ID" value="NC_005071.1"/>
</dbReference>
<dbReference type="SMR" id="Q7V3V2"/>
<dbReference type="MEROPS" id="M38.982"/>
<dbReference type="KEGG" id="pmt:PMT_2236"/>
<dbReference type="eggNOG" id="COG0804">
    <property type="taxonomic scope" value="Bacteria"/>
</dbReference>
<dbReference type="HOGENOM" id="CLU_000980_0_0_3"/>
<dbReference type="OrthoDB" id="9802793at2"/>
<dbReference type="UniPathway" id="UPA00258">
    <property type="reaction ID" value="UER00370"/>
</dbReference>
<dbReference type="Proteomes" id="UP000001423">
    <property type="component" value="Chromosome"/>
</dbReference>
<dbReference type="GO" id="GO:0005737">
    <property type="term" value="C:cytoplasm"/>
    <property type="evidence" value="ECO:0007669"/>
    <property type="project" value="UniProtKB-SubCell"/>
</dbReference>
<dbReference type="GO" id="GO:0016151">
    <property type="term" value="F:nickel cation binding"/>
    <property type="evidence" value="ECO:0007669"/>
    <property type="project" value="UniProtKB-UniRule"/>
</dbReference>
<dbReference type="GO" id="GO:0009039">
    <property type="term" value="F:urease activity"/>
    <property type="evidence" value="ECO:0007669"/>
    <property type="project" value="UniProtKB-UniRule"/>
</dbReference>
<dbReference type="GO" id="GO:0043419">
    <property type="term" value="P:urea catabolic process"/>
    <property type="evidence" value="ECO:0007669"/>
    <property type="project" value="UniProtKB-UniRule"/>
</dbReference>
<dbReference type="CDD" id="cd00375">
    <property type="entry name" value="Urease_alpha"/>
    <property type="match status" value="1"/>
</dbReference>
<dbReference type="Gene3D" id="3.20.20.140">
    <property type="entry name" value="Metal-dependent hydrolases"/>
    <property type="match status" value="1"/>
</dbReference>
<dbReference type="Gene3D" id="2.30.40.10">
    <property type="entry name" value="Urease, subunit C, domain 1"/>
    <property type="match status" value="1"/>
</dbReference>
<dbReference type="HAMAP" id="MF_01953">
    <property type="entry name" value="Urease_alpha"/>
    <property type="match status" value="1"/>
</dbReference>
<dbReference type="InterPro" id="IPR006680">
    <property type="entry name" value="Amidohydro-rel"/>
</dbReference>
<dbReference type="InterPro" id="IPR011059">
    <property type="entry name" value="Metal-dep_hydrolase_composite"/>
</dbReference>
<dbReference type="InterPro" id="IPR032466">
    <property type="entry name" value="Metal_Hydrolase"/>
</dbReference>
<dbReference type="InterPro" id="IPR011612">
    <property type="entry name" value="Urease_alpha_N_dom"/>
</dbReference>
<dbReference type="InterPro" id="IPR050112">
    <property type="entry name" value="Urease_alpha_subunit"/>
</dbReference>
<dbReference type="InterPro" id="IPR017950">
    <property type="entry name" value="Urease_AS"/>
</dbReference>
<dbReference type="InterPro" id="IPR005848">
    <property type="entry name" value="Urease_asu"/>
</dbReference>
<dbReference type="InterPro" id="IPR017951">
    <property type="entry name" value="Urease_asu_c"/>
</dbReference>
<dbReference type="InterPro" id="IPR029754">
    <property type="entry name" value="Urease_Ni-bd"/>
</dbReference>
<dbReference type="NCBIfam" id="NF009685">
    <property type="entry name" value="PRK13206.1"/>
    <property type="match status" value="1"/>
</dbReference>
<dbReference type="NCBIfam" id="NF009686">
    <property type="entry name" value="PRK13207.1"/>
    <property type="match status" value="1"/>
</dbReference>
<dbReference type="NCBIfam" id="TIGR01792">
    <property type="entry name" value="urease_alph"/>
    <property type="match status" value="1"/>
</dbReference>
<dbReference type="PANTHER" id="PTHR43440">
    <property type="entry name" value="UREASE"/>
    <property type="match status" value="1"/>
</dbReference>
<dbReference type="PANTHER" id="PTHR43440:SF1">
    <property type="entry name" value="UREASE"/>
    <property type="match status" value="1"/>
</dbReference>
<dbReference type="Pfam" id="PF01979">
    <property type="entry name" value="Amidohydro_1"/>
    <property type="match status" value="1"/>
</dbReference>
<dbReference type="Pfam" id="PF00449">
    <property type="entry name" value="Urease_alpha"/>
    <property type="match status" value="1"/>
</dbReference>
<dbReference type="PRINTS" id="PR01752">
    <property type="entry name" value="UREASE"/>
</dbReference>
<dbReference type="SUPFAM" id="SSF51338">
    <property type="entry name" value="Composite domain of metallo-dependent hydrolases"/>
    <property type="match status" value="2"/>
</dbReference>
<dbReference type="SUPFAM" id="SSF51556">
    <property type="entry name" value="Metallo-dependent hydrolases"/>
    <property type="match status" value="1"/>
</dbReference>
<dbReference type="PROSITE" id="PS01120">
    <property type="entry name" value="UREASE_1"/>
    <property type="match status" value="1"/>
</dbReference>
<dbReference type="PROSITE" id="PS00145">
    <property type="entry name" value="UREASE_2"/>
    <property type="match status" value="1"/>
</dbReference>
<dbReference type="PROSITE" id="PS51368">
    <property type="entry name" value="UREASE_3"/>
    <property type="match status" value="1"/>
</dbReference>
<accession>Q7V3V2</accession>
<gene>
    <name evidence="1" type="primary">ureC</name>
    <name type="ordered locus">PMT_2236</name>
</gene>
<reference key="1">
    <citation type="journal article" date="2003" name="Nature">
        <title>Genome divergence in two Prochlorococcus ecotypes reflects oceanic niche differentiation.</title>
        <authorList>
            <person name="Rocap G."/>
            <person name="Larimer F.W."/>
            <person name="Lamerdin J.E."/>
            <person name="Malfatti S."/>
            <person name="Chain P."/>
            <person name="Ahlgren N.A."/>
            <person name="Arellano A."/>
            <person name="Coleman M."/>
            <person name="Hauser L."/>
            <person name="Hess W.R."/>
            <person name="Johnson Z.I."/>
            <person name="Land M.L."/>
            <person name="Lindell D."/>
            <person name="Post A.F."/>
            <person name="Regala W."/>
            <person name="Shah M."/>
            <person name="Shaw S.L."/>
            <person name="Steglich C."/>
            <person name="Sullivan M.B."/>
            <person name="Ting C.S."/>
            <person name="Tolonen A."/>
            <person name="Webb E.A."/>
            <person name="Zinser E.R."/>
            <person name="Chisholm S.W."/>
        </authorList>
    </citation>
    <scope>NUCLEOTIDE SEQUENCE [LARGE SCALE GENOMIC DNA]</scope>
    <source>
        <strain>MIT 9313</strain>
    </source>
</reference>
<keyword id="KW-0963">Cytoplasm</keyword>
<keyword id="KW-0378">Hydrolase</keyword>
<keyword id="KW-0479">Metal-binding</keyword>
<keyword id="KW-0533">Nickel</keyword>
<keyword id="KW-1185">Reference proteome</keyword>